<comment type="function">
    <text evidence="1">Binds the lower part of the 30S subunit head. Binds mRNA in the 70S ribosome, positioning it for translation.</text>
</comment>
<comment type="subunit">
    <text evidence="1">Part of the 30S ribosomal subunit. Forms a tight complex with proteins S10 and S14.</text>
</comment>
<comment type="similarity">
    <text evidence="1">Belongs to the universal ribosomal protein uS3 family.</text>
</comment>
<name>RS3_POLSJ</name>
<accession>Q12GW5</accession>
<reference key="1">
    <citation type="journal article" date="2008" name="Appl. Environ. Microbiol.">
        <title>The genome of Polaromonas sp. strain JS666: insights into the evolution of a hydrocarbon- and xenobiotic-degrading bacterium, and features of relevance to biotechnology.</title>
        <authorList>
            <person name="Mattes T.E."/>
            <person name="Alexander A.K."/>
            <person name="Richardson P.M."/>
            <person name="Munk A.C."/>
            <person name="Han C.S."/>
            <person name="Stothard P."/>
            <person name="Coleman N.V."/>
        </authorList>
    </citation>
    <scope>NUCLEOTIDE SEQUENCE [LARGE SCALE GENOMIC DNA]</scope>
    <source>
        <strain>JS666 / ATCC BAA-500</strain>
    </source>
</reference>
<protein>
    <recommendedName>
        <fullName evidence="1">Small ribosomal subunit protein uS3</fullName>
    </recommendedName>
    <alternativeName>
        <fullName evidence="3">30S ribosomal protein S3</fullName>
    </alternativeName>
</protein>
<keyword id="KW-1185">Reference proteome</keyword>
<keyword id="KW-0687">Ribonucleoprotein</keyword>
<keyword id="KW-0689">Ribosomal protein</keyword>
<keyword id="KW-0694">RNA-binding</keyword>
<keyword id="KW-0699">rRNA-binding</keyword>
<dbReference type="EMBL" id="CP000316">
    <property type="protein sequence ID" value="ABE42227.1"/>
    <property type="molecule type" value="Genomic_DNA"/>
</dbReference>
<dbReference type="RefSeq" id="WP_011481234.1">
    <property type="nucleotide sequence ID" value="NC_007948.1"/>
</dbReference>
<dbReference type="SMR" id="Q12GW5"/>
<dbReference type="STRING" id="296591.Bpro_0262"/>
<dbReference type="KEGG" id="pol:Bpro_0262"/>
<dbReference type="eggNOG" id="COG0092">
    <property type="taxonomic scope" value="Bacteria"/>
</dbReference>
<dbReference type="HOGENOM" id="CLU_058591_0_2_4"/>
<dbReference type="OrthoDB" id="9806396at2"/>
<dbReference type="Proteomes" id="UP000001983">
    <property type="component" value="Chromosome"/>
</dbReference>
<dbReference type="GO" id="GO:0022627">
    <property type="term" value="C:cytosolic small ribosomal subunit"/>
    <property type="evidence" value="ECO:0007669"/>
    <property type="project" value="TreeGrafter"/>
</dbReference>
<dbReference type="GO" id="GO:0003729">
    <property type="term" value="F:mRNA binding"/>
    <property type="evidence" value="ECO:0007669"/>
    <property type="project" value="UniProtKB-UniRule"/>
</dbReference>
<dbReference type="GO" id="GO:0019843">
    <property type="term" value="F:rRNA binding"/>
    <property type="evidence" value="ECO:0007669"/>
    <property type="project" value="UniProtKB-UniRule"/>
</dbReference>
<dbReference type="GO" id="GO:0003735">
    <property type="term" value="F:structural constituent of ribosome"/>
    <property type="evidence" value="ECO:0007669"/>
    <property type="project" value="InterPro"/>
</dbReference>
<dbReference type="GO" id="GO:0006412">
    <property type="term" value="P:translation"/>
    <property type="evidence" value="ECO:0007669"/>
    <property type="project" value="UniProtKB-UniRule"/>
</dbReference>
<dbReference type="CDD" id="cd02412">
    <property type="entry name" value="KH-II_30S_S3"/>
    <property type="match status" value="1"/>
</dbReference>
<dbReference type="FunFam" id="3.30.1140.32:FF:000001">
    <property type="entry name" value="30S ribosomal protein S3"/>
    <property type="match status" value="1"/>
</dbReference>
<dbReference type="FunFam" id="3.30.300.20:FF:000001">
    <property type="entry name" value="30S ribosomal protein S3"/>
    <property type="match status" value="1"/>
</dbReference>
<dbReference type="Gene3D" id="3.30.300.20">
    <property type="match status" value="1"/>
</dbReference>
<dbReference type="Gene3D" id="3.30.1140.32">
    <property type="entry name" value="Ribosomal protein S3, C-terminal domain"/>
    <property type="match status" value="1"/>
</dbReference>
<dbReference type="HAMAP" id="MF_01309_B">
    <property type="entry name" value="Ribosomal_uS3_B"/>
    <property type="match status" value="1"/>
</dbReference>
<dbReference type="InterPro" id="IPR004087">
    <property type="entry name" value="KH_dom"/>
</dbReference>
<dbReference type="InterPro" id="IPR015946">
    <property type="entry name" value="KH_dom-like_a/b"/>
</dbReference>
<dbReference type="InterPro" id="IPR004044">
    <property type="entry name" value="KH_dom_type_2"/>
</dbReference>
<dbReference type="InterPro" id="IPR009019">
    <property type="entry name" value="KH_sf_prok-type"/>
</dbReference>
<dbReference type="InterPro" id="IPR036419">
    <property type="entry name" value="Ribosomal_S3_C_sf"/>
</dbReference>
<dbReference type="InterPro" id="IPR005704">
    <property type="entry name" value="Ribosomal_uS3_bac-typ"/>
</dbReference>
<dbReference type="InterPro" id="IPR001351">
    <property type="entry name" value="Ribosomal_uS3_C"/>
</dbReference>
<dbReference type="InterPro" id="IPR018280">
    <property type="entry name" value="Ribosomal_uS3_CS"/>
</dbReference>
<dbReference type="NCBIfam" id="TIGR01009">
    <property type="entry name" value="rpsC_bact"/>
    <property type="match status" value="1"/>
</dbReference>
<dbReference type="PANTHER" id="PTHR11760">
    <property type="entry name" value="30S/40S RIBOSOMAL PROTEIN S3"/>
    <property type="match status" value="1"/>
</dbReference>
<dbReference type="PANTHER" id="PTHR11760:SF19">
    <property type="entry name" value="SMALL RIBOSOMAL SUBUNIT PROTEIN US3C"/>
    <property type="match status" value="1"/>
</dbReference>
<dbReference type="Pfam" id="PF07650">
    <property type="entry name" value="KH_2"/>
    <property type="match status" value="1"/>
</dbReference>
<dbReference type="Pfam" id="PF00189">
    <property type="entry name" value="Ribosomal_S3_C"/>
    <property type="match status" value="1"/>
</dbReference>
<dbReference type="SMART" id="SM00322">
    <property type="entry name" value="KH"/>
    <property type="match status" value="1"/>
</dbReference>
<dbReference type="SUPFAM" id="SSF54814">
    <property type="entry name" value="Prokaryotic type KH domain (KH-domain type II)"/>
    <property type="match status" value="1"/>
</dbReference>
<dbReference type="SUPFAM" id="SSF54821">
    <property type="entry name" value="Ribosomal protein S3 C-terminal domain"/>
    <property type="match status" value="1"/>
</dbReference>
<dbReference type="PROSITE" id="PS50823">
    <property type="entry name" value="KH_TYPE_2"/>
    <property type="match status" value="1"/>
</dbReference>
<dbReference type="PROSITE" id="PS00548">
    <property type="entry name" value="RIBOSOMAL_S3"/>
    <property type="match status" value="1"/>
</dbReference>
<sequence length="301" mass="32790">MGQKINPTGFRLAVSRNWASRWYASNRDFAGMLAEDIKVREYLKAKLKNAAVSRVLIERPAKNARITIFSARPGVVIGKKGEDIENLKKELSRQLGVPVAVNIEEVRKPEIDAKLIADSITQQLEKRIMFRRAMKRAMQNAMRLGALGIKIMSSGRLNGIEIARCEWYREGRVPLHTLRADIDYGTSEAKTTYGVIGVKVWVYKGDTLGRGESPGAKLDAAPSDEERKPRGPRRDARPGSDRPAPRGARAPRAPAGGTNTAPADGSDKPAEATPGSDAPKTTVKRVRKAAPAAAADGTKTE</sequence>
<gene>
    <name evidence="1" type="primary">rpsC</name>
    <name type="ordered locus">Bpro_0262</name>
</gene>
<feature type="chain" id="PRO_0000293849" description="Small ribosomal subunit protein uS3">
    <location>
        <begin position="1"/>
        <end position="301"/>
    </location>
</feature>
<feature type="domain" description="KH type-2" evidence="1">
    <location>
        <begin position="39"/>
        <end position="107"/>
    </location>
</feature>
<feature type="region of interest" description="Disordered" evidence="2">
    <location>
        <begin position="211"/>
        <end position="301"/>
    </location>
</feature>
<feature type="compositionally biased region" description="Basic and acidic residues" evidence="2">
    <location>
        <begin position="224"/>
        <end position="244"/>
    </location>
</feature>
<feature type="compositionally biased region" description="Low complexity" evidence="2">
    <location>
        <begin position="245"/>
        <end position="257"/>
    </location>
</feature>
<evidence type="ECO:0000255" key="1">
    <source>
        <dbReference type="HAMAP-Rule" id="MF_01309"/>
    </source>
</evidence>
<evidence type="ECO:0000256" key="2">
    <source>
        <dbReference type="SAM" id="MobiDB-lite"/>
    </source>
</evidence>
<evidence type="ECO:0000305" key="3"/>
<organism>
    <name type="scientific">Polaromonas sp. (strain JS666 / ATCC BAA-500)</name>
    <dbReference type="NCBI Taxonomy" id="296591"/>
    <lineage>
        <taxon>Bacteria</taxon>
        <taxon>Pseudomonadati</taxon>
        <taxon>Pseudomonadota</taxon>
        <taxon>Betaproteobacteria</taxon>
        <taxon>Burkholderiales</taxon>
        <taxon>Comamonadaceae</taxon>
        <taxon>Polaromonas</taxon>
    </lineage>
</organism>
<proteinExistence type="inferred from homology"/>